<feature type="chain" id="PRO_0000031060" description="DNA-directed RNA polymerase 132 kDa polypeptide">
    <location>
        <begin position="1"/>
        <end position="1164"/>
    </location>
</feature>
<feature type="splice variant" id="VSP_018882" description="In isoform 2." evidence="2">
    <location>
        <begin position="1"/>
        <end position="8"/>
    </location>
</feature>
<proteinExistence type="inferred from homology"/>
<protein>
    <recommendedName>
        <fullName>DNA-directed RNA polymerase 132 kDa polypeptide</fullName>
        <ecNumber>2.7.7.6</ecNumber>
    </recommendedName>
</protein>
<evidence type="ECO:0000250" key="1"/>
<evidence type="ECO:0000305" key="2"/>
<comment type="function">
    <text evidence="1">Part of the DNA-dependent RNA polymerase which catalyzes the transcription of viral DNA into RNA using the four ribonucleoside triphosphates as substrates. Responsible for the transcription of early, intermediate and late genes. DNA-dependent RNA polymerase associates with the early transcription factor (ETF), itself composed of D6 and A7, thereby allowing the early genes transcription. Late transcription, and probably also intermediate transcription, require newly synthesized RNA polymerase (By similarity).</text>
</comment>
<comment type="catalytic activity">
    <reaction>
        <text>RNA(n) + a ribonucleoside 5'-triphosphate = RNA(n+1) + diphosphate</text>
        <dbReference type="Rhea" id="RHEA:21248"/>
        <dbReference type="Rhea" id="RHEA-COMP:14527"/>
        <dbReference type="Rhea" id="RHEA-COMP:17342"/>
        <dbReference type="ChEBI" id="CHEBI:33019"/>
        <dbReference type="ChEBI" id="CHEBI:61557"/>
        <dbReference type="ChEBI" id="CHEBI:140395"/>
        <dbReference type="EC" id="2.7.7.6"/>
    </reaction>
</comment>
<comment type="subunit">
    <text evidence="1">The DNA-dependent RNA polymerase used for intermediate and late genes expression consists of eight subunits (147) kDa, (133) kDa, (35) kDa, (30) kDa, (22) kDa, (19) kDa, (18) kDa and (7) kDa totalling more than 500 kDa in mass. The same holoenzyme, with the addition of the transcription-specificity factor RAP94, is used for early gene expression (By similarity).</text>
</comment>
<comment type="subcellular location">
    <subcellularLocation>
        <location evidence="1">Virion</location>
    </subcellularLocation>
    <text evidence="1">All the enzymes and other proteins required to synthesize early mRNAs are packaged within the virion core along with the DNA genome. This is necessary because viral early mRNAs are synthesized within minutes after virus entry into the cell and are extruded through pores in the core particle (By similarity).</text>
</comment>
<comment type="alternative products">
    <event type="alternative initiation"/>
    <isoform>
        <id>Q80DV1-1</id>
        <name>1</name>
        <name>Late specific</name>
        <sequence type="displayed"/>
    </isoform>
    <isoform>
        <id>Q80DV1-2</id>
        <name>2</name>
        <name>Early and Late</name>
        <sequence type="described" ref="VSP_018882"/>
    </isoform>
</comment>
<comment type="miscellaneous">
    <molecule>Isoform 1</molecule>
    <text>Produced at late time only.</text>
</comment>
<comment type="miscellaneous">
    <molecule>Isoform 2</molecule>
    <text evidence="2">Produced both at early and late times.</text>
</comment>
<comment type="similarity">
    <text evidence="2">Belongs to the RNA polymerase beta chain family.</text>
</comment>
<reference key="1">
    <citation type="submission" date="2003-03" db="EMBL/GenBank/DDBJ databases">
        <title>Structure-function and organization of cowpox virus strain GRI-90 complete genome.</title>
        <authorList>
            <person name="Shchelkunov S.N."/>
            <person name="Safronov P.F."/>
            <person name="Totmenin A.V."/>
            <person name="Miheev M.V."/>
            <person name="Ryazankina O.I."/>
            <person name="Petrov N.A."/>
            <person name="Gutorov V.V."/>
            <person name="Kotwal G.J."/>
            <person name="Sandakhchiev L.S."/>
        </authorList>
    </citation>
    <scope>NUCLEOTIDE SEQUENCE [LARGE SCALE GENOMIC DNA]</scope>
</reference>
<sequence>MKKNTDSEMDQRLGYKFLVPDPKAGVFYRPLHFQYVSYSNFILHRLHEILTVKRPLLSFKNNTERIMIEISNVKVTPPDYSPIIASIKGKSYDALATFTVNIFKEVMTKEGISITKISSYEGKDSHLIKIPLLIGYGNKNPLDTAKYLVPNVIGGVFINKQSVEKVGINLVEKITTWPKFRVVKPNSFTFSFSSVSPPNVLPTRYRHYKISLDISQLEASNISSTKTFITVNIVLLSQYLSRVSLEFIRRSLSYDMPPEVVYLVNAIIDSAKRITESITDFNIDTYINDLVEAEHIKQKSQLTINEFKYEMLHNFLPHMNYTPDQLKGFYMISLLRKFLYCIYHTSRYPDRDSMVCHRILTYGKYFETLAHDELENYIGNIRNDIMNNHKNRGTYAVNIHVLTTPGLNHAFSSLLSGKFKKSDGSYRTHPHYSWMQNISIPRSVGFYPDQVKISKMFSVRKYHPSQYLYFCSSDVPERGPQVGLVSQLSVLSSITNILTSEYLDLEKKICEYIRSYYKDDISYFETGFPITIENALVASLNPNMICDFVTDFRRRKRMGFFGNLEVGITLVRDHMNEIRINIGAGRLVRPFLVVDNGELMMDVCPELESRLDDMTFSDIQKEFPHVIEMVDIEQFTFSNVCESVQKFRMMSKDERKQYDLCDFPAEFRDGYVASSLVGINHNSGPRAILGCAQAKQAISCLSSDIRNKIDNGIHLMYPERPIVISKALETSKIAANCFGQHVTIALMSYKGINQEDGIIIKKQFIQRGGLDIVTAKKHQVEIPLENFNNKERDRSNAYSKLESNGLVRLNAFLESGDAMARNISSRTLEDDFARDNQISFDVSEKYTDMYKSRVERVQVELTDKVKVRVLTMKERRPILGDKFTTRTSQKGTVAYIADETELPYDENGITPDVIINSTSIFSRKTISMLIEVILTAAYSAKPYNNKGENRPVCFPSSNETSIDTYMQFAKQCYEHSNPKLSDEELSDKIFCEKILYDPETDKPYTSKVFFGPIYYLRLRHLTQDKATVRCRGKKTKLIRQANEGRKRGGGIKFGEMERDCLIAHGAANTITEVLKDSEEDYQDVYICENCGDIAAQIKSINTCLRCSKLNLSPLLTKIDTTHVSKVFLTQMNARGVKVKLDFERRPPSFYKPLDKVDLKPSFLV</sequence>
<gene>
    <name type="primary">RPO132</name>
    <name type="ORF">A25R</name>
</gene>
<dbReference type="EC" id="2.7.7.6"/>
<dbReference type="EMBL" id="X94355">
    <property type="protein sequence ID" value="CAD90692.1"/>
    <property type="molecule type" value="Genomic_DNA"/>
</dbReference>
<dbReference type="SMR" id="Q80DV1"/>
<dbReference type="Proteomes" id="UP000137384">
    <property type="component" value="Segment"/>
</dbReference>
<dbReference type="GO" id="GO:0000428">
    <property type="term" value="C:DNA-directed RNA polymerase complex"/>
    <property type="evidence" value="ECO:0007669"/>
    <property type="project" value="UniProtKB-KW"/>
</dbReference>
<dbReference type="GO" id="GO:0044423">
    <property type="term" value="C:virion component"/>
    <property type="evidence" value="ECO:0007669"/>
    <property type="project" value="UniProtKB-KW"/>
</dbReference>
<dbReference type="GO" id="GO:0003677">
    <property type="term" value="F:DNA binding"/>
    <property type="evidence" value="ECO:0007669"/>
    <property type="project" value="InterPro"/>
</dbReference>
<dbReference type="GO" id="GO:0003899">
    <property type="term" value="F:DNA-directed RNA polymerase activity"/>
    <property type="evidence" value="ECO:0007669"/>
    <property type="project" value="UniProtKB-EC"/>
</dbReference>
<dbReference type="GO" id="GO:0046872">
    <property type="term" value="F:metal ion binding"/>
    <property type="evidence" value="ECO:0007669"/>
    <property type="project" value="UniProtKB-KW"/>
</dbReference>
<dbReference type="GO" id="GO:0032549">
    <property type="term" value="F:ribonucleoside binding"/>
    <property type="evidence" value="ECO:0007669"/>
    <property type="project" value="InterPro"/>
</dbReference>
<dbReference type="GO" id="GO:0006351">
    <property type="term" value="P:DNA-templated transcription"/>
    <property type="evidence" value="ECO:0007669"/>
    <property type="project" value="InterPro"/>
</dbReference>
<dbReference type="Gene3D" id="2.40.50.150">
    <property type="match status" value="1"/>
</dbReference>
<dbReference type="Gene3D" id="3.90.1100.10">
    <property type="match status" value="2"/>
</dbReference>
<dbReference type="Gene3D" id="2.40.270.10">
    <property type="entry name" value="DNA-directed RNA polymerase, subunit 2, domain 6"/>
    <property type="match status" value="1"/>
</dbReference>
<dbReference type="Gene3D" id="3.90.1800.10">
    <property type="entry name" value="RNA polymerase alpha subunit dimerisation domain"/>
    <property type="match status" value="1"/>
</dbReference>
<dbReference type="InterPro" id="IPR015712">
    <property type="entry name" value="DNA-dir_RNA_pol_su2"/>
</dbReference>
<dbReference type="InterPro" id="IPR007120">
    <property type="entry name" value="DNA-dir_RNAP_su2_dom"/>
</dbReference>
<dbReference type="InterPro" id="IPR037033">
    <property type="entry name" value="DNA-dir_RNAP_su2_hyb_sf"/>
</dbReference>
<dbReference type="InterPro" id="IPR024390">
    <property type="entry name" value="RNA_pol_132_poxvirus"/>
</dbReference>
<dbReference type="InterPro" id="IPR007121">
    <property type="entry name" value="RNA_pol_bsu_CS"/>
</dbReference>
<dbReference type="InterPro" id="IPR007645">
    <property type="entry name" value="RNA_pol_Rpb2_3"/>
</dbReference>
<dbReference type="InterPro" id="IPR007647">
    <property type="entry name" value="RNA_pol_Rpb2_5"/>
</dbReference>
<dbReference type="InterPro" id="IPR007641">
    <property type="entry name" value="RNA_pol_Rpb2_7"/>
</dbReference>
<dbReference type="InterPro" id="IPR014724">
    <property type="entry name" value="RNA_pol_RPB2_OB-fold"/>
</dbReference>
<dbReference type="PANTHER" id="PTHR20856">
    <property type="entry name" value="DNA-DIRECTED RNA POLYMERASE I SUBUNIT 2"/>
    <property type="match status" value="1"/>
</dbReference>
<dbReference type="Pfam" id="PF04565">
    <property type="entry name" value="RNA_pol_Rpb2_3"/>
    <property type="match status" value="1"/>
</dbReference>
<dbReference type="Pfam" id="PF04567">
    <property type="entry name" value="RNA_pol_Rpb2_5"/>
    <property type="match status" value="1"/>
</dbReference>
<dbReference type="Pfam" id="PF00562">
    <property type="entry name" value="RNA_pol_Rpb2_6"/>
    <property type="match status" value="1"/>
</dbReference>
<dbReference type="Pfam" id="PF04560">
    <property type="entry name" value="RNA_pol_Rpb2_7"/>
    <property type="match status" value="1"/>
</dbReference>
<dbReference type="Pfam" id="PF12415">
    <property type="entry name" value="rpo132"/>
    <property type="match status" value="1"/>
</dbReference>
<dbReference type="SUPFAM" id="SSF64484">
    <property type="entry name" value="beta and beta-prime subunits of DNA dependent RNA-polymerase"/>
    <property type="match status" value="1"/>
</dbReference>
<dbReference type="PROSITE" id="PS01166">
    <property type="entry name" value="RNA_POL_BETA"/>
    <property type="match status" value="1"/>
</dbReference>
<organism>
    <name type="scientific">Cowpox virus (strain GRI-90 / Grishak)</name>
    <name type="common">CPV</name>
    <dbReference type="NCBI Taxonomy" id="265871"/>
    <lineage>
        <taxon>Viruses</taxon>
        <taxon>Varidnaviria</taxon>
        <taxon>Bamfordvirae</taxon>
        <taxon>Nucleocytoviricota</taxon>
        <taxon>Pokkesviricetes</taxon>
        <taxon>Chitovirales</taxon>
        <taxon>Poxviridae</taxon>
        <taxon>Chordopoxvirinae</taxon>
        <taxon>Orthopoxvirus</taxon>
        <taxon>Cowpox virus</taxon>
    </lineage>
</organism>
<name>RP132_CWPXG</name>
<organismHost>
    <name type="scientific">Bos taurus</name>
    <name type="common">Bovine</name>
    <dbReference type="NCBI Taxonomy" id="9913"/>
</organismHost>
<organismHost>
    <name type="scientific">Felis catus</name>
    <name type="common">Cat</name>
    <name type="synonym">Felis silvestris catus</name>
    <dbReference type="NCBI Taxonomy" id="9685"/>
</organismHost>
<organismHost>
    <name type="scientific">Homo sapiens</name>
    <name type="common">Human</name>
    <dbReference type="NCBI Taxonomy" id="9606"/>
</organismHost>
<organismHost>
    <name type="scientific">Loxodonta africana</name>
    <name type="common">African elephant</name>
    <dbReference type="NCBI Taxonomy" id="9785"/>
</organismHost>
<organismHost>
    <name type="scientific">Microtus agrestis</name>
    <name type="common">Short-tailed field vole</name>
    <dbReference type="NCBI Taxonomy" id="29092"/>
</organismHost>
<organismHost>
    <name type="scientific">Mus musculus</name>
    <name type="common">Mouse</name>
    <dbReference type="NCBI Taxonomy" id="10090"/>
</organismHost>
<organismHost>
    <name type="scientific">Myodes glareolus</name>
    <name type="common">Bank vole</name>
    <name type="synonym">Clethrionomys glareolus</name>
    <dbReference type="NCBI Taxonomy" id="447135"/>
</organismHost>
<accession>Q80DV1</accession>
<keyword id="KW-0024">Alternative initiation</keyword>
<keyword id="KW-0240">DNA-directed RNA polymerase</keyword>
<keyword id="KW-0479">Metal-binding</keyword>
<keyword id="KW-0548">Nucleotidyltransferase</keyword>
<keyword id="KW-0804">Transcription</keyword>
<keyword id="KW-0808">Transferase</keyword>
<keyword id="KW-0946">Virion</keyword>